<organism>
    <name type="scientific">Streptococcus pyogenes serotype M2 (strain MGAS10270)</name>
    <dbReference type="NCBI Taxonomy" id="370552"/>
    <lineage>
        <taxon>Bacteria</taxon>
        <taxon>Bacillati</taxon>
        <taxon>Bacillota</taxon>
        <taxon>Bacilli</taxon>
        <taxon>Lactobacillales</taxon>
        <taxon>Streptococcaceae</taxon>
        <taxon>Streptococcus</taxon>
    </lineage>
</organism>
<accession>Q1JF32</accession>
<gene>
    <name evidence="1" type="primary">tsaD</name>
    <name type="synonym">gcp</name>
    <name type="ordered locus">MGAS10270_Spy1662</name>
</gene>
<name>TSAD_STRPD</name>
<feature type="chain" id="PRO_0000303568" description="tRNA N6-adenosine threonylcarbamoyltransferase">
    <location>
        <begin position="1"/>
        <end position="342"/>
    </location>
</feature>
<feature type="binding site" evidence="1">
    <location>
        <position position="114"/>
    </location>
    <ligand>
        <name>Fe cation</name>
        <dbReference type="ChEBI" id="CHEBI:24875"/>
    </ligand>
</feature>
<feature type="binding site" evidence="1">
    <location>
        <position position="118"/>
    </location>
    <ligand>
        <name>Fe cation</name>
        <dbReference type="ChEBI" id="CHEBI:24875"/>
    </ligand>
</feature>
<feature type="binding site" evidence="1">
    <location>
        <begin position="136"/>
        <end position="140"/>
    </location>
    <ligand>
        <name>substrate</name>
    </ligand>
</feature>
<feature type="binding site" evidence="1">
    <location>
        <position position="169"/>
    </location>
    <ligand>
        <name>substrate</name>
    </ligand>
</feature>
<feature type="binding site" evidence="1">
    <location>
        <position position="182"/>
    </location>
    <ligand>
        <name>substrate</name>
    </ligand>
</feature>
<feature type="binding site" evidence="1">
    <location>
        <position position="186"/>
    </location>
    <ligand>
        <name>substrate</name>
    </ligand>
</feature>
<feature type="binding site" evidence="1">
    <location>
        <position position="275"/>
    </location>
    <ligand>
        <name>substrate</name>
    </ligand>
</feature>
<feature type="binding site" evidence="1">
    <location>
        <position position="301"/>
    </location>
    <ligand>
        <name>Fe cation</name>
        <dbReference type="ChEBI" id="CHEBI:24875"/>
    </ligand>
</feature>
<proteinExistence type="inferred from homology"/>
<evidence type="ECO:0000255" key="1">
    <source>
        <dbReference type="HAMAP-Rule" id="MF_01445"/>
    </source>
</evidence>
<dbReference type="EC" id="2.3.1.234" evidence="1"/>
<dbReference type="EMBL" id="CP000260">
    <property type="protein sequence ID" value="ABF34727.1"/>
    <property type="molecule type" value="Genomic_DNA"/>
</dbReference>
<dbReference type="SMR" id="Q1JF32"/>
<dbReference type="KEGG" id="sph:MGAS10270_Spy1662"/>
<dbReference type="HOGENOM" id="CLU_023208_0_2_9"/>
<dbReference type="Proteomes" id="UP000002436">
    <property type="component" value="Chromosome"/>
</dbReference>
<dbReference type="GO" id="GO:0005737">
    <property type="term" value="C:cytoplasm"/>
    <property type="evidence" value="ECO:0007669"/>
    <property type="project" value="UniProtKB-SubCell"/>
</dbReference>
<dbReference type="GO" id="GO:0005506">
    <property type="term" value="F:iron ion binding"/>
    <property type="evidence" value="ECO:0007669"/>
    <property type="project" value="UniProtKB-UniRule"/>
</dbReference>
<dbReference type="GO" id="GO:0061711">
    <property type="term" value="F:N(6)-L-threonylcarbamoyladenine synthase activity"/>
    <property type="evidence" value="ECO:0007669"/>
    <property type="project" value="UniProtKB-EC"/>
</dbReference>
<dbReference type="GO" id="GO:0002949">
    <property type="term" value="P:tRNA threonylcarbamoyladenosine modification"/>
    <property type="evidence" value="ECO:0007669"/>
    <property type="project" value="UniProtKB-UniRule"/>
</dbReference>
<dbReference type="CDD" id="cd24133">
    <property type="entry name" value="ASKHA_NBD_TsaD_bac"/>
    <property type="match status" value="1"/>
</dbReference>
<dbReference type="FunFam" id="3.30.420.40:FF:000012">
    <property type="entry name" value="tRNA N6-adenosine threonylcarbamoyltransferase"/>
    <property type="match status" value="1"/>
</dbReference>
<dbReference type="FunFam" id="3.30.420.40:FF:000040">
    <property type="entry name" value="tRNA N6-adenosine threonylcarbamoyltransferase"/>
    <property type="match status" value="1"/>
</dbReference>
<dbReference type="Gene3D" id="3.30.420.40">
    <property type="match status" value="2"/>
</dbReference>
<dbReference type="HAMAP" id="MF_01445">
    <property type="entry name" value="TsaD"/>
    <property type="match status" value="1"/>
</dbReference>
<dbReference type="InterPro" id="IPR043129">
    <property type="entry name" value="ATPase_NBD"/>
</dbReference>
<dbReference type="InterPro" id="IPR000905">
    <property type="entry name" value="Gcp-like_dom"/>
</dbReference>
<dbReference type="InterPro" id="IPR017861">
    <property type="entry name" value="KAE1/TsaD"/>
</dbReference>
<dbReference type="InterPro" id="IPR022450">
    <property type="entry name" value="TsaD"/>
</dbReference>
<dbReference type="NCBIfam" id="TIGR00329">
    <property type="entry name" value="gcp_kae1"/>
    <property type="match status" value="1"/>
</dbReference>
<dbReference type="NCBIfam" id="TIGR03723">
    <property type="entry name" value="T6A_TsaD_YgjD"/>
    <property type="match status" value="1"/>
</dbReference>
<dbReference type="PANTHER" id="PTHR11735">
    <property type="entry name" value="TRNA N6-ADENOSINE THREONYLCARBAMOYLTRANSFERASE"/>
    <property type="match status" value="1"/>
</dbReference>
<dbReference type="PANTHER" id="PTHR11735:SF6">
    <property type="entry name" value="TRNA N6-ADENOSINE THREONYLCARBAMOYLTRANSFERASE, MITOCHONDRIAL"/>
    <property type="match status" value="1"/>
</dbReference>
<dbReference type="Pfam" id="PF00814">
    <property type="entry name" value="TsaD"/>
    <property type="match status" value="1"/>
</dbReference>
<dbReference type="PRINTS" id="PR00789">
    <property type="entry name" value="OSIALOPTASE"/>
</dbReference>
<dbReference type="SUPFAM" id="SSF53067">
    <property type="entry name" value="Actin-like ATPase domain"/>
    <property type="match status" value="1"/>
</dbReference>
<sequence length="342" mass="36961">MTDRYILAVESSCDETSVAILKNESTLLSNVIASQVESHKRFGGVVPEVASRHHVEVITTCFEDALQEAGISASDLSAVAVTYGPGLVGALLVGLAAAKAFAWANHLPLIPVNHMAGHLMAAREQKPLVYPLIALLVSGGHTELVYVPEPGDYHIIGETRDDAVGEAYDKVGRVMGLTYPAGREIDQLAHKGQDTYHFPRAMITEDHLEFSFSGLKSAFINLHHNAKQKGDELILEDLCASFQAAVLDILLAKTKKALSRYPAKMLVVAGGVAANQGLRDRLTQEITHIEVVIPKLRLCGDNAGMIALAAAIEYDKQHFANMSLNAKPSLAFDQFPDSFVIN</sequence>
<comment type="function">
    <text evidence="1">Required for the formation of a threonylcarbamoyl group on adenosine at position 37 (t(6)A37) in tRNAs that read codons beginning with adenine. Is involved in the transfer of the threonylcarbamoyl moiety of threonylcarbamoyl-AMP (TC-AMP) to the N6 group of A37, together with TsaE and TsaB. TsaD likely plays a direct catalytic role in this reaction.</text>
</comment>
<comment type="catalytic activity">
    <reaction evidence="1">
        <text>L-threonylcarbamoyladenylate + adenosine(37) in tRNA = N(6)-L-threonylcarbamoyladenosine(37) in tRNA + AMP + H(+)</text>
        <dbReference type="Rhea" id="RHEA:37059"/>
        <dbReference type="Rhea" id="RHEA-COMP:10162"/>
        <dbReference type="Rhea" id="RHEA-COMP:10163"/>
        <dbReference type="ChEBI" id="CHEBI:15378"/>
        <dbReference type="ChEBI" id="CHEBI:73682"/>
        <dbReference type="ChEBI" id="CHEBI:74411"/>
        <dbReference type="ChEBI" id="CHEBI:74418"/>
        <dbReference type="ChEBI" id="CHEBI:456215"/>
        <dbReference type="EC" id="2.3.1.234"/>
    </reaction>
</comment>
<comment type="cofactor">
    <cofactor evidence="1">
        <name>Fe(2+)</name>
        <dbReference type="ChEBI" id="CHEBI:29033"/>
    </cofactor>
    <text evidence="1">Binds 1 Fe(2+) ion per subunit.</text>
</comment>
<comment type="subcellular location">
    <subcellularLocation>
        <location evidence="1">Cytoplasm</location>
    </subcellularLocation>
</comment>
<comment type="similarity">
    <text evidence="1">Belongs to the KAE1 / TsaD family.</text>
</comment>
<protein>
    <recommendedName>
        <fullName evidence="1">tRNA N6-adenosine threonylcarbamoyltransferase</fullName>
        <ecNumber evidence="1">2.3.1.234</ecNumber>
    </recommendedName>
    <alternativeName>
        <fullName evidence="1">N6-L-threonylcarbamoyladenine synthase</fullName>
        <shortName evidence="1">t(6)A synthase</shortName>
    </alternativeName>
    <alternativeName>
        <fullName evidence="1">t(6)A37 threonylcarbamoyladenosine biosynthesis protein TsaD</fullName>
    </alternativeName>
    <alternativeName>
        <fullName evidence="1">tRNA threonylcarbamoyladenosine biosynthesis protein TsaD</fullName>
    </alternativeName>
</protein>
<reference key="1">
    <citation type="journal article" date="2006" name="Proc. Natl. Acad. Sci. U.S.A.">
        <title>Molecular genetic anatomy of inter- and intraserotype variation in the human bacterial pathogen group A Streptococcus.</title>
        <authorList>
            <person name="Beres S.B."/>
            <person name="Richter E.W."/>
            <person name="Nagiec M.J."/>
            <person name="Sumby P."/>
            <person name="Porcella S.F."/>
            <person name="DeLeo F.R."/>
            <person name="Musser J.M."/>
        </authorList>
    </citation>
    <scope>NUCLEOTIDE SEQUENCE [LARGE SCALE GENOMIC DNA]</scope>
    <source>
        <strain>MGAS10270</strain>
    </source>
</reference>
<keyword id="KW-0012">Acyltransferase</keyword>
<keyword id="KW-0963">Cytoplasm</keyword>
<keyword id="KW-0408">Iron</keyword>
<keyword id="KW-0479">Metal-binding</keyword>
<keyword id="KW-0808">Transferase</keyword>
<keyword id="KW-0819">tRNA processing</keyword>